<keyword id="KW-0472">Membrane</keyword>
<keyword id="KW-1185">Reference proteome</keyword>
<keyword id="KW-0732">Signal</keyword>
<keyword id="KW-0812">Transmembrane</keyword>
<keyword id="KW-1133">Transmembrane helix</keyword>
<evidence type="ECO:0000250" key="1"/>
<evidence type="ECO:0000255" key="2"/>
<evidence type="ECO:0000255" key="3">
    <source>
        <dbReference type="PROSITE-ProRule" id="PRU00691"/>
    </source>
</evidence>
<evidence type="ECO:0000305" key="4"/>
<sequence length="271" mass="31323">MTWKKQMALLAKPYYWVNILLAISYLLAKKTQFICTRLFILAGEDEACDLDSREVEILFFLLIVVMIRSRKTGSVTMINYLASSFLYTKVANAILWAYADFRYGLGFLLLCVLVGMVLPEPSYRGPEHITYFRNAQVFEEELARDKRTSWLICFYTVWNPSCVNFAPVFAELSAEYNTDHLKFGKIDIGRFPDVAQKYRISDSSFSRQLPTVILFQQGKETDRRPCVDSKGKLQKFFFSSDNVRATFGLNQLYKEAIERLPIAPKEAKKVQ</sequence>
<accession>Q7JW12</accession>
<gene>
    <name type="ORF">CG11007</name>
</gene>
<feature type="signal peptide" evidence="2">
    <location>
        <begin position="1"/>
        <end position="28"/>
    </location>
</feature>
<feature type="chain" id="PRO_0000315761" description="Thioredoxin-related transmembrane protein 2 homolog">
    <location>
        <begin position="29"/>
        <end position="271"/>
    </location>
</feature>
<feature type="topological domain" description="Extracellular" evidence="2">
    <location>
        <begin position="29"/>
        <end position="102"/>
    </location>
</feature>
<feature type="transmembrane region" description="Helical" evidence="2">
    <location>
        <begin position="103"/>
        <end position="123"/>
    </location>
</feature>
<feature type="topological domain" description="Cytoplasmic" evidence="2">
    <location>
        <begin position="124"/>
        <end position="271"/>
    </location>
</feature>
<feature type="domain" description="Thioredoxin" evidence="3">
    <location>
        <begin position="112"/>
        <end position="262"/>
    </location>
</feature>
<feature type="short sequence motif" description="Di-lysine motif">
    <location>
        <begin position="268"/>
        <end position="271"/>
    </location>
</feature>
<dbReference type="EMBL" id="AE013599">
    <property type="protein sequence ID" value="AAF57540.1"/>
    <property type="molecule type" value="Genomic_DNA"/>
</dbReference>
<dbReference type="EMBL" id="AY118488">
    <property type="protein sequence ID" value="AAM49857.1"/>
    <property type="molecule type" value="mRNA"/>
</dbReference>
<dbReference type="RefSeq" id="NP_001286617.1">
    <property type="nucleotide sequence ID" value="NM_001299688.1"/>
</dbReference>
<dbReference type="RefSeq" id="NP_611429.1">
    <property type="nucleotide sequence ID" value="NM_137585.4"/>
</dbReference>
<dbReference type="SMR" id="Q7JW12"/>
<dbReference type="BioGRID" id="62907">
    <property type="interactions" value="11"/>
</dbReference>
<dbReference type="FunCoup" id="Q7JW12">
    <property type="interactions" value="806"/>
</dbReference>
<dbReference type="IntAct" id="Q7JW12">
    <property type="interactions" value="7"/>
</dbReference>
<dbReference type="STRING" id="7227.FBpp0311843"/>
<dbReference type="PaxDb" id="7227-FBpp0085660"/>
<dbReference type="DNASU" id="37249"/>
<dbReference type="EnsemblMetazoa" id="FBtr0086464">
    <property type="protein sequence ID" value="FBpp0085660"/>
    <property type="gene ID" value="FBgn0034455"/>
</dbReference>
<dbReference type="EnsemblMetazoa" id="FBtr0345929">
    <property type="protein sequence ID" value="FBpp0311843"/>
    <property type="gene ID" value="FBgn0034455"/>
</dbReference>
<dbReference type="GeneID" id="37249"/>
<dbReference type="KEGG" id="dme:Dmel_CG11007"/>
<dbReference type="UCSC" id="CG11007-RA">
    <property type="organism name" value="d. melanogaster"/>
</dbReference>
<dbReference type="AGR" id="FB:FBgn0034455"/>
<dbReference type="FlyBase" id="FBgn0034455">
    <property type="gene designation" value="CG11007"/>
</dbReference>
<dbReference type="VEuPathDB" id="VectorBase:FBgn0034455"/>
<dbReference type="eggNOG" id="KOG0914">
    <property type="taxonomic scope" value="Eukaryota"/>
</dbReference>
<dbReference type="GeneTree" id="ENSGT00390000003751"/>
<dbReference type="HOGENOM" id="CLU_064868_1_0_1"/>
<dbReference type="InParanoid" id="Q7JW12"/>
<dbReference type="OMA" id="VIMIRTR"/>
<dbReference type="OrthoDB" id="20229at2759"/>
<dbReference type="PhylomeDB" id="Q7JW12"/>
<dbReference type="BioGRID-ORCS" id="37249">
    <property type="hits" value="0 hits in 1 CRISPR screen"/>
</dbReference>
<dbReference type="GenomeRNAi" id="37249"/>
<dbReference type="PRO" id="PR:Q7JW12"/>
<dbReference type="Proteomes" id="UP000000803">
    <property type="component" value="Chromosome 2R"/>
</dbReference>
<dbReference type="Bgee" id="FBgn0034455">
    <property type="expression patterns" value="Expressed in oviduct (Drosophila) and 106 other cell types or tissues"/>
</dbReference>
<dbReference type="ExpressionAtlas" id="Q7JW12">
    <property type="expression patterns" value="baseline and differential"/>
</dbReference>
<dbReference type="GO" id="GO:0005789">
    <property type="term" value="C:endoplasmic reticulum membrane"/>
    <property type="evidence" value="ECO:0000250"/>
    <property type="project" value="FlyBase"/>
</dbReference>
<dbReference type="GO" id="GO:0044233">
    <property type="term" value="C:mitochondria-associated endoplasmic reticulum membrane contact site"/>
    <property type="evidence" value="ECO:0000250"/>
    <property type="project" value="FlyBase"/>
</dbReference>
<dbReference type="GO" id="GO:0005739">
    <property type="term" value="C:mitochondrion"/>
    <property type="evidence" value="ECO:0000318"/>
    <property type="project" value="GO_Central"/>
</dbReference>
<dbReference type="GO" id="GO:0015036">
    <property type="term" value="F:disulfide oxidoreductase activity"/>
    <property type="evidence" value="ECO:0000318"/>
    <property type="project" value="GO_Central"/>
</dbReference>
<dbReference type="CDD" id="cd02962">
    <property type="entry name" value="TMX2"/>
    <property type="match status" value="1"/>
</dbReference>
<dbReference type="Gene3D" id="3.40.30.10">
    <property type="entry name" value="Glutaredoxin"/>
    <property type="match status" value="1"/>
</dbReference>
<dbReference type="InterPro" id="IPR036249">
    <property type="entry name" value="Thioredoxin-like_sf"/>
</dbReference>
<dbReference type="InterPro" id="IPR013766">
    <property type="entry name" value="Thioredoxin_domain"/>
</dbReference>
<dbReference type="InterPro" id="IPR039101">
    <property type="entry name" value="TMX2"/>
</dbReference>
<dbReference type="InterPro" id="IPR037463">
    <property type="entry name" value="TMX2_thioredoxin_dom"/>
</dbReference>
<dbReference type="PANTHER" id="PTHR15853">
    <property type="entry name" value="THIOREDOXIN-RELATED"/>
    <property type="match status" value="1"/>
</dbReference>
<dbReference type="PANTHER" id="PTHR15853:SF0">
    <property type="entry name" value="THIOREDOXIN-RELATED TRANSMEMBRANE PROTEIN 2"/>
    <property type="match status" value="1"/>
</dbReference>
<dbReference type="Pfam" id="PF00085">
    <property type="entry name" value="Thioredoxin"/>
    <property type="match status" value="1"/>
</dbReference>
<dbReference type="SUPFAM" id="SSF52833">
    <property type="entry name" value="Thioredoxin-like"/>
    <property type="match status" value="1"/>
</dbReference>
<dbReference type="PROSITE" id="PS51352">
    <property type="entry name" value="THIOREDOXIN_2"/>
    <property type="match status" value="1"/>
</dbReference>
<protein>
    <recommendedName>
        <fullName>Thioredoxin-related transmembrane protein 2 homolog</fullName>
    </recommendedName>
    <alternativeName>
        <fullName>Thioredoxin domain-containing protein 14 homolog</fullName>
    </alternativeName>
</protein>
<reference key="1">
    <citation type="journal article" date="2000" name="Science">
        <title>The genome sequence of Drosophila melanogaster.</title>
        <authorList>
            <person name="Adams M.D."/>
            <person name="Celniker S.E."/>
            <person name="Holt R.A."/>
            <person name="Evans C.A."/>
            <person name="Gocayne J.D."/>
            <person name="Amanatides P.G."/>
            <person name="Scherer S.E."/>
            <person name="Li P.W."/>
            <person name="Hoskins R.A."/>
            <person name="Galle R.F."/>
            <person name="George R.A."/>
            <person name="Lewis S.E."/>
            <person name="Richards S."/>
            <person name="Ashburner M."/>
            <person name="Henderson S.N."/>
            <person name="Sutton G.G."/>
            <person name="Wortman J.R."/>
            <person name="Yandell M.D."/>
            <person name="Zhang Q."/>
            <person name="Chen L.X."/>
            <person name="Brandon R.C."/>
            <person name="Rogers Y.-H.C."/>
            <person name="Blazej R.G."/>
            <person name="Champe M."/>
            <person name="Pfeiffer B.D."/>
            <person name="Wan K.H."/>
            <person name="Doyle C."/>
            <person name="Baxter E.G."/>
            <person name="Helt G."/>
            <person name="Nelson C.R."/>
            <person name="Miklos G.L.G."/>
            <person name="Abril J.F."/>
            <person name="Agbayani A."/>
            <person name="An H.-J."/>
            <person name="Andrews-Pfannkoch C."/>
            <person name="Baldwin D."/>
            <person name="Ballew R.M."/>
            <person name="Basu A."/>
            <person name="Baxendale J."/>
            <person name="Bayraktaroglu L."/>
            <person name="Beasley E.M."/>
            <person name="Beeson K.Y."/>
            <person name="Benos P.V."/>
            <person name="Berman B.P."/>
            <person name="Bhandari D."/>
            <person name="Bolshakov S."/>
            <person name="Borkova D."/>
            <person name="Botchan M.R."/>
            <person name="Bouck J."/>
            <person name="Brokstein P."/>
            <person name="Brottier P."/>
            <person name="Burtis K.C."/>
            <person name="Busam D.A."/>
            <person name="Butler H."/>
            <person name="Cadieu E."/>
            <person name="Center A."/>
            <person name="Chandra I."/>
            <person name="Cherry J.M."/>
            <person name="Cawley S."/>
            <person name="Dahlke C."/>
            <person name="Davenport L.B."/>
            <person name="Davies P."/>
            <person name="de Pablos B."/>
            <person name="Delcher A."/>
            <person name="Deng Z."/>
            <person name="Mays A.D."/>
            <person name="Dew I."/>
            <person name="Dietz S.M."/>
            <person name="Dodson K."/>
            <person name="Doup L.E."/>
            <person name="Downes M."/>
            <person name="Dugan-Rocha S."/>
            <person name="Dunkov B.C."/>
            <person name="Dunn P."/>
            <person name="Durbin K.J."/>
            <person name="Evangelista C.C."/>
            <person name="Ferraz C."/>
            <person name="Ferriera S."/>
            <person name="Fleischmann W."/>
            <person name="Fosler C."/>
            <person name="Gabrielian A.E."/>
            <person name="Garg N.S."/>
            <person name="Gelbart W.M."/>
            <person name="Glasser K."/>
            <person name="Glodek A."/>
            <person name="Gong F."/>
            <person name="Gorrell J.H."/>
            <person name="Gu Z."/>
            <person name="Guan P."/>
            <person name="Harris M."/>
            <person name="Harris N.L."/>
            <person name="Harvey D.A."/>
            <person name="Heiman T.J."/>
            <person name="Hernandez J.R."/>
            <person name="Houck J."/>
            <person name="Hostin D."/>
            <person name="Houston K.A."/>
            <person name="Howland T.J."/>
            <person name="Wei M.-H."/>
            <person name="Ibegwam C."/>
            <person name="Jalali M."/>
            <person name="Kalush F."/>
            <person name="Karpen G.H."/>
            <person name="Ke Z."/>
            <person name="Kennison J.A."/>
            <person name="Ketchum K.A."/>
            <person name="Kimmel B.E."/>
            <person name="Kodira C.D."/>
            <person name="Kraft C.L."/>
            <person name="Kravitz S."/>
            <person name="Kulp D."/>
            <person name="Lai Z."/>
            <person name="Lasko P."/>
            <person name="Lei Y."/>
            <person name="Levitsky A.A."/>
            <person name="Li J.H."/>
            <person name="Li Z."/>
            <person name="Liang Y."/>
            <person name="Lin X."/>
            <person name="Liu X."/>
            <person name="Mattei B."/>
            <person name="McIntosh T.C."/>
            <person name="McLeod M.P."/>
            <person name="McPherson D."/>
            <person name="Merkulov G."/>
            <person name="Milshina N.V."/>
            <person name="Mobarry C."/>
            <person name="Morris J."/>
            <person name="Moshrefi A."/>
            <person name="Mount S.M."/>
            <person name="Moy M."/>
            <person name="Murphy B."/>
            <person name="Murphy L."/>
            <person name="Muzny D.M."/>
            <person name="Nelson D.L."/>
            <person name="Nelson D.R."/>
            <person name="Nelson K.A."/>
            <person name="Nixon K."/>
            <person name="Nusskern D.R."/>
            <person name="Pacleb J.M."/>
            <person name="Palazzolo M."/>
            <person name="Pittman G.S."/>
            <person name="Pan S."/>
            <person name="Pollard J."/>
            <person name="Puri V."/>
            <person name="Reese M.G."/>
            <person name="Reinert K."/>
            <person name="Remington K."/>
            <person name="Saunders R.D.C."/>
            <person name="Scheeler F."/>
            <person name="Shen H."/>
            <person name="Shue B.C."/>
            <person name="Siden-Kiamos I."/>
            <person name="Simpson M."/>
            <person name="Skupski M.P."/>
            <person name="Smith T.J."/>
            <person name="Spier E."/>
            <person name="Spradling A.C."/>
            <person name="Stapleton M."/>
            <person name="Strong R."/>
            <person name="Sun E."/>
            <person name="Svirskas R."/>
            <person name="Tector C."/>
            <person name="Turner R."/>
            <person name="Venter E."/>
            <person name="Wang A.H."/>
            <person name="Wang X."/>
            <person name="Wang Z.-Y."/>
            <person name="Wassarman D.A."/>
            <person name="Weinstock G.M."/>
            <person name="Weissenbach J."/>
            <person name="Williams S.M."/>
            <person name="Woodage T."/>
            <person name="Worley K.C."/>
            <person name="Wu D."/>
            <person name="Yang S."/>
            <person name="Yao Q.A."/>
            <person name="Ye J."/>
            <person name="Yeh R.-F."/>
            <person name="Zaveri J.S."/>
            <person name="Zhan M."/>
            <person name="Zhang G."/>
            <person name="Zhao Q."/>
            <person name="Zheng L."/>
            <person name="Zheng X.H."/>
            <person name="Zhong F.N."/>
            <person name="Zhong W."/>
            <person name="Zhou X."/>
            <person name="Zhu S.C."/>
            <person name="Zhu X."/>
            <person name="Smith H.O."/>
            <person name="Gibbs R.A."/>
            <person name="Myers E.W."/>
            <person name="Rubin G.M."/>
            <person name="Venter J.C."/>
        </authorList>
    </citation>
    <scope>NUCLEOTIDE SEQUENCE [LARGE SCALE GENOMIC DNA]</scope>
    <source>
        <strain>Berkeley</strain>
    </source>
</reference>
<reference key="2">
    <citation type="journal article" date="2002" name="Genome Biol.">
        <title>Annotation of the Drosophila melanogaster euchromatic genome: a systematic review.</title>
        <authorList>
            <person name="Misra S."/>
            <person name="Crosby M.A."/>
            <person name="Mungall C.J."/>
            <person name="Matthews B.B."/>
            <person name="Campbell K.S."/>
            <person name="Hradecky P."/>
            <person name="Huang Y."/>
            <person name="Kaminker J.S."/>
            <person name="Millburn G.H."/>
            <person name="Prochnik S.E."/>
            <person name="Smith C.D."/>
            <person name="Tupy J.L."/>
            <person name="Whitfield E.J."/>
            <person name="Bayraktaroglu L."/>
            <person name="Berman B.P."/>
            <person name="Bettencourt B.R."/>
            <person name="Celniker S.E."/>
            <person name="de Grey A.D.N.J."/>
            <person name="Drysdale R.A."/>
            <person name="Harris N.L."/>
            <person name="Richter J."/>
            <person name="Russo S."/>
            <person name="Schroeder A.J."/>
            <person name="Shu S.Q."/>
            <person name="Stapleton M."/>
            <person name="Yamada C."/>
            <person name="Ashburner M."/>
            <person name="Gelbart W.M."/>
            <person name="Rubin G.M."/>
            <person name="Lewis S.E."/>
        </authorList>
    </citation>
    <scope>GENOME REANNOTATION</scope>
    <source>
        <strain>Berkeley</strain>
    </source>
</reference>
<reference key="3">
    <citation type="journal article" date="2002" name="Genome Biol.">
        <title>A Drosophila full-length cDNA resource.</title>
        <authorList>
            <person name="Stapleton M."/>
            <person name="Carlson J.W."/>
            <person name="Brokstein P."/>
            <person name="Yu C."/>
            <person name="Champe M."/>
            <person name="George R.A."/>
            <person name="Guarin H."/>
            <person name="Kronmiller B."/>
            <person name="Pacleb J.M."/>
            <person name="Park S."/>
            <person name="Wan K.H."/>
            <person name="Rubin G.M."/>
            <person name="Celniker S.E."/>
        </authorList>
    </citation>
    <scope>NUCLEOTIDE SEQUENCE [LARGE SCALE MRNA]</scope>
    <source>
        <strain>Berkeley</strain>
        <tissue>Embryo</tissue>
    </source>
</reference>
<proteinExistence type="evidence at transcript level"/>
<name>TMX2_DROME</name>
<organism>
    <name type="scientific">Drosophila melanogaster</name>
    <name type="common">Fruit fly</name>
    <dbReference type="NCBI Taxonomy" id="7227"/>
    <lineage>
        <taxon>Eukaryota</taxon>
        <taxon>Metazoa</taxon>
        <taxon>Ecdysozoa</taxon>
        <taxon>Arthropoda</taxon>
        <taxon>Hexapoda</taxon>
        <taxon>Insecta</taxon>
        <taxon>Pterygota</taxon>
        <taxon>Neoptera</taxon>
        <taxon>Endopterygota</taxon>
        <taxon>Diptera</taxon>
        <taxon>Brachycera</taxon>
        <taxon>Muscomorpha</taxon>
        <taxon>Ephydroidea</taxon>
        <taxon>Drosophilidae</taxon>
        <taxon>Drosophila</taxon>
        <taxon>Sophophora</taxon>
    </lineage>
</organism>
<comment type="subcellular location">
    <subcellularLocation>
        <location evidence="4">Membrane</location>
        <topology evidence="4">Single-pass type I membrane protein</topology>
    </subcellularLocation>
</comment>
<comment type="domain">
    <text evidence="1">The thioredoxin domain lacks the 2 redox-active cysteines, suggesting that it lacks thioredoxin activity.</text>
</comment>
<comment type="domain">
    <text evidence="1">The di-lysine motif confers endoplasmic reticulum localization for type I membrane proteins.</text>
</comment>